<protein>
    <recommendedName>
        <fullName>Probable N-succinyldiaminopimelate aminotransferase DapC</fullName>
    </recommendedName>
    <alternativeName>
        <fullName>DAP-AT</fullName>
        <ecNumber>2.6.1.17</ecNumber>
    </alternativeName>
</protein>
<comment type="function">
    <text evidence="5">Involved in the lysine biosynthetic pathways. It catalyzes the transfer of an amino group from L-glutamate to N-succinyl-2-l-amino-6-oxoheptanedioate (N-succinyl-2-l-amino-6-ketopimelate) in a PLP-dependent reaction, yielding as products N-succinyl-l-2,6-diaminoheptanedioate (N-succinyl-diaminopimelate) and 2-oxoglutarate (Probable).</text>
</comment>
<comment type="catalytic activity">
    <reaction>
        <text>N-succinyl-(2S,6S)-2,6-diaminopimelate + 2-oxoglutarate = (S)-2-succinylamino-6-oxoheptanedioate + L-glutamate</text>
        <dbReference type="Rhea" id="RHEA:11960"/>
        <dbReference type="ChEBI" id="CHEBI:15685"/>
        <dbReference type="ChEBI" id="CHEBI:16810"/>
        <dbReference type="ChEBI" id="CHEBI:29985"/>
        <dbReference type="ChEBI" id="CHEBI:58087"/>
        <dbReference type="EC" id="2.6.1.17"/>
    </reaction>
</comment>
<comment type="cofactor">
    <cofactor>
        <name>pyridoxal 5'-phosphate</name>
        <dbReference type="ChEBI" id="CHEBI:597326"/>
    </cofactor>
    <text>Binds 1 pyridoxal phosphate per subunit.</text>
</comment>
<comment type="pathway">
    <text>Amino-acid biosynthesis; L-lysine biosynthesis via DAP pathway; LL-2,6-diaminopimelate from (S)-tetrahydrodipicolinate (succinylase route): step 2/3.</text>
</comment>
<comment type="subunit">
    <text evidence="2 3">Homodimer.</text>
</comment>
<comment type="subcellular location">
    <subcellularLocation>
        <location evidence="4">Cytoplasm</location>
    </subcellularLocation>
</comment>
<comment type="similarity">
    <text evidence="4">Belongs to the class-III pyridoxal-phosphate-dependent aminotransferase family.</text>
</comment>
<keyword id="KW-0002">3D-structure</keyword>
<keyword id="KW-0028">Amino-acid biosynthesis</keyword>
<keyword id="KW-0032">Aminotransferase</keyword>
<keyword id="KW-0963">Cytoplasm</keyword>
<keyword id="KW-0457">Lysine biosynthesis</keyword>
<keyword id="KW-0663">Pyridoxal phosphate</keyword>
<keyword id="KW-1185">Reference proteome</keyword>
<keyword id="KW-0808">Transferase</keyword>
<accession>P9WPZ5</accession>
<accession>L0T542</accession>
<accession>O53870</accession>
<accession>Q7D954</accession>
<organism>
    <name type="scientific">Mycobacterium tuberculosis (strain ATCC 25618 / H37Rv)</name>
    <dbReference type="NCBI Taxonomy" id="83332"/>
    <lineage>
        <taxon>Bacteria</taxon>
        <taxon>Bacillati</taxon>
        <taxon>Actinomycetota</taxon>
        <taxon>Actinomycetes</taxon>
        <taxon>Mycobacteriales</taxon>
        <taxon>Mycobacteriaceae</taxon>
        <taxon>Mycobacterium</taxon>
        <taxon>Mycobacterium tuberculosis complex</taxon>
    </lineage>
</organism>
<proteinExistence type="evidence at protein level"/>
<feature type="chain" id="PRO_0000414591" description="Probable N-succinyldiaminopimelate aminotransferase DapC">
    <location>
        <begin position="1"/>
        <end position="397"/>
    </location>
</feature>
<feature type="binding site" evidence="1">
    <location>
        <begin position="109"/>
        <end position="110"/>
    </location>
    <ligand>
        <name>pyridoxal 5'-phosphate</name>
        <dbReference type="ChEBI" id="CHEBI:597326"/>
    </ligand>
</feature>
<feature type="binding site" evidence="1">
    <location>
        <begin position="218"/>
        <end position="222"/>
    </location>
    <ligand>
        <name>pyridoxal 5'-phosphate</name>
        <dbReference type="ChEBI" id="CHEBI:597326"/>
    </ligand>
</feature>
<feature type="modified residue" description="N6-(pyridoxal phosphate)lysine">
    <location>
        <position position="232"/>
    </location>
</feature>
<feature type="helix" evidence="6">
    <location>
        <begin position="4"/>
        <end position="9"/>
    </location>
</feature>
<feature type="helix" evidence="6">
    <location>
        <begin position="13"/>
        <end position="22"/>
    </location>
</feature>
<feature type="turn" evidence="6">
    <location>
        <begin position="23"/>
        <end position="25"/>
    </location>
</feature>
<feature type="strand" evidence="6">
    <location>
        <begin position="27"/>
        <end position="30"/>
    </location>
</feature>
<feature type="helix" evidence="6">
    <location>
        <begin position="40"/>
        <end position="51"/>
    </location>
</feature>
<feature type="helix" evidence="6">
    <location>
        <begin position="64"/>
        <end position="78"/>
    </location>
</feature>
<feature type="turn" evidence="6">
    <location>
        <begin position="84"/>
        <end position="86"/>
    </location>
</feature>
<feature type="strand" evidence="6">
    <location>
        <begin position="87"/>
        <end position="92"/>
    </location>
</feature>
<feature type="helix" evidence="6">
    <location>
        <begin position="93"/>
        <end position="105"/>
    </location>
</feature>
<feature type="strand" evidence="6">
    <location>
        <begin position="111"/>
        <end position="117"/>
    </location>
</feature>
<feature type="helix" evidence="6">
    <location>
        <begin position="122"/>
        <end position="128"/>
    </location>
</feature>
<feature type="strand" evidence="6">
    <location>
        <begin position="132"/>
        <end position="137"/>
    </location>
</feature>
<feature type="strand" evidence="6">
    <location>
        <begin position="139"/>
        <end position="141"/>
    </location>
</feature>
<feature type="strand" evidence="6">
    <location>
        <begin position="144"/>
        <end position="146"/>
    </location>
</feature>
<feature type="helix" evidence="6">
    <location>
        <begin position="149"/>
        <end position="155"/>
    </location>
</feature>
<feature type="strand" evidence="6">
    <location>
        <begin position="160"/>
        <end position="168"/>
    </location>
</feature>
<feature type="turn" evidence="6">
    <location>
        <begin position="170"/>
        <end position="172"/>
    </location>
</feature>
<feature type="helix" evidence="6">
    <location>
        <begin position="178"/>
        <end position="190"/>
    </location>
</feature>
<feature type="strand" evidence="6">
    <location>
        <begin position="194"/>
        <end position="198"/>
    </location>
</feature>
<feature type="turn" evidence="6">
    <location>
        <begin position="200"/>
        <end position="203"/>
    </location>
</feature>
<feature type="helix" evidence="6">
    <location>
        <begin position="214"/>
        <end position="216"/>
    </location>
</feature>
<feature type="turn" evidence="6">
    <location>
        <begin position="218"/>
        <end position="220"/>
    </location>
</feature>
<feature type="helix" evidence="6">
    <location>
        <begin position="221"/>
        <end position="223"/>
    </location>
</feature>
<feature type="strand" evidence="6">
    <location>
        <begin position="224"/>
        <end position="229"/>
    </location>
</feature>
<feature type="turn" evidence="6">
    <location>
        <begin position="237"/>
        <end position="239"/>
    </location>
</feature>
<feature type="strand" evidence="6">
    <location>
        <begin position="241"/>
        <end position="245"/>
    </location>
</feature>
<feature type="helix" evidence="6">
    <location>
        <begin position="248"/>
        <end position="261"/>
    </location>
</feature>
<feature type="helix" evidence="6">
    <location>
        <begin position="269"/>
        <end position="279"/>
    </location>
</feature>
<feature type="helix" evidence="6">
    <location>
        <begin position="281"/>
        <end position="305"/>
    </location>
</feature>
<feature type="strand" evidence="6">
    <location>
        <begin position="314"/>
        <end position="321"/>
    </location>
</feature>
<feature type="helix" evidence="6">
    <location>
        <begin position="323"/>
        <end position="325"/>
    </location>
</feature>
<feature type="helix" evidence="6">
    <location>
        <begin position="330"/>
        <end position="341"/>
    </location>
</feature>
<feature type="strand" evidence="6">
    <location>
        <begin position="342"/>
        <end position="344"/>
    </location>
</feature>
<feature type="helix" evidence="6">
    <location>
        <begin position="348"/>
        <end position="351"/>
    </location>
</feature>
<feature type="helix" evidence="6">
    <location>
        <begin position="366"/>
        <end position="368"/>
    </location>
</feature>
<feature type="strand" evidence="6">
    <location>
        <begin position="370"/>
        <end position="373"/>
    </location>
</feature>
<feature type="helix" evidence="6">
    <location>
        <begin position="378"/>
        <end position="388"/>
    </location>
</feature>
<feature type="helix" evidence="6">
    <location>
        <begin position="389"/>
        <end position="392"/>
    </location>
</feature>
<sequence length="397" mass="42209">MTVSRLRPYATTVFAEMSALATRIGAVNLGQGFPDEDGPPKMLQAAQDAIAGGVNQYPPGPGSAPLRRAIAAQRRRHFGVDYDPETEVLVTVGATEAIAAAVLGLVEPGSEVLLIEPFYDSYSPVVAMAGAHRVTVPLVPDGRGFALDADALRRAVTPRTRALIINSPHNPTGAVLSATELAAIAEIAVAANLVVITDEVYEHLVFDHARHLPLAGFDGMAERTITISSAAKMFNCTGWKIGWACGPAELIAGVRAAKQYLSYVGGAPFQPAVALALDTEDAWVAALRNSLRARRDRLAAGLTEIGFAVHDSYGTYFLCADPRPLGYDDSTEFCAALPEKVGVAAIPMSAFCDPAAGQASQQADVWNHLVRFTFCKRDDTLDEAIRRLSVLAERPAT</sequence>
<name>DAPC_MYCTU</name>
<reference key="1">
    <citation type="journal article" date="1998" name="Nature">
        <title>Deciphering the biology of Mycobacterium tuberculosis from the complete genome sequence.</title>
        <authorList>
            <person name="Cole S.T."/>
            <person name="Brosch R."/>
            <person name="Parkhill J."/>
            <person name="Garnier T."/>
            <person name="Churcher C.M."/>
            <person name="Harris D.E."/>
            <person name="Gordon S.V."/>
            <person name="Eiglmeier K."/>
            <person name="Gas S."/>
            <person name="Barry C.E. III"/>
            <person name="Tekaia F."/>
            <person name="Badcock K."/>
            <person name="Basham D."/>
            <person name="Brown D."/>
            <person name="Chillingworth T."/>
            <person name="Connor R."/>
            <person name="Davies R.M."/>
            <person name="Devlin K."/>
            <person name="Feltwell T."/>
            <person name="Gentles S."/>
            <person name="Hamlin N."/>
            <person name="Holroyd S."/>
            <person name="Hornsby T."/>
            <person name="Jagels K."/>
            <person name="Krogh A."/>
            <person name="McLean J."/>
            <person name="Moule S."/>
            <person name="Murphy L.D."/>
            <person name="Oliver S."/>
            <person name="Osborne J."/>
            <person name="Quail M.A."/>
            <person name="Rajandream M.A."/>
            <person name="Rogers J."/>
            <person name="Rutter S."/>
            <person name="Seeger K."/>
            <person name="Skelton S."/>
            <person name="Squares S."/>
            <person name="Squares R."/>
            <person name="Sulston J.E."/>
            <person name="Taylor K."/>
            <person name="Whitehead S."/>
            <person name="Barrell B.G."/>
        </authorList>
    </citation>
    <scope>NUCLEOTIDE SEQUENCE [LARGE SCALE GENOMIC DNA]</scope>
    <source>
        <strain>ATCC 25618 / H37Rv</strain>
    </source>
</reference>
<reference key="2">
    <citation type="journal article" date="2006" name="Acta Crystallogr. F">
        <title>Cloning, expression, purification, crystallization and preliminary X-ray diffraction analysis of DapC (Rv0858c) from Mycobacterium tuberculosis.</title>
        <authorList>
            <person name="Weyand S."/>
            <person name="Kefala G."/>
            <person name="Weiss M.S."/>
        </authorList>
    </citation>
    <scope>SUBUNIT</scope>
</reference>
<reference key="3">
    <citation type="journal article" date="2011" name="Mol. Cell. Proteomics">
        <title>Proteogenomic analysis of Mycobacterium tuberculosis by high resolution mass spectrometry.</title>
        <authorList>
            <person name="Kelkar D.S."/>
            <person name="Kumar D."/>
            <person name="Kumar P."/>
            <person name="Balakrishnan L."/>
            <person name="Muthusamy B."/>
            <person name="Yadav A.K."/>
            <person name="Shrivastava P."/>
            <person name="Marimuthu A."/>
            <person name="Anand S."/>
            <person name="Sundaram H."/>
            <person name="Kingsbury R."/>
            <person name="Harsha H.C."/>
            <person name="Nair B."/>
            <person name="Prasad T.S."/>
            <person name="Chauhan D.S."/>
            <person name="Katoch K."/>
            <person name="Katoch V.M."/>
            <person name="Kumar P."/>
            <person name="Chaerkady R."/>
            <person name="Ramachandran S."/>
            <person name="Dash D."/>
            <person name="Pandey A."/>
        </authorList>
    </citation>
    <scope>IDENTIFICATION BY MASS SPECTROMETRY [LARGE SCALE ANALYSIS]</scope>
    <source>
        <strain>ATCC 25618 / H37Rv</strain>
    </source>
</reference>
<reference key="4">
    <citation type="journal article" date="2007" name="J. Mol. Biol.">
        <title>The three-dimensional structure of N-succinyldiaminopimelate aminotransferase from Mycobacterium tuberculosis.</title>
        <authorList>
            <person name="Weyand S."/>
            <person name="Kefala G."/>
            <person name="Weiss M.S."/>
        </authorList>
    </citation>
    <scope>X-RAY CRYSTALLOGRAPHY (2.00 ANGSTROMS) OF 2-397</scope>
    <scope>FUNCTION</scope>
    <scope>SUBUNIT</scope>
</reference>
<gene>
    <name type="primary">dapC</name>
    <name type="ordered locus">Rv0858c</name>
</gene>
<evidence type="ECO:0000250" key="1"/>
<evidence type="ECO:0000269" key="2">
    <source>
    </source>
</evidence>
<evidence type="ECO:0000269" key="3">
    <source>
    </source>
</evidence>
<evidence type="ECO:0000305" key="4"/>
<evidence type="ECO:0000305" key="5">
    <source>
    </source>
</evidence>
<evidence type="ECO:0007829" key="6">
    <source>
        <dbReference type="PDB" id="2O0R"/>
    </source>
</evidence>
<dbReference type="EC" id="2.6.1.17"/>
<dbReference type="EMBL" id="AL123456">
    <property type="protein sequence ID" value="CCP43606.1"/>
    <property type="molecule type" value="Genomic_DNA"/>
</dbReference>
<dbReference type="PIR" id="B70815">
    <property type="entry name" value="B70815"/>
</dbReference>
<dbReference type="RefSeq" id="NP_215373.1">
    <property type="nucleotide sequence ID" value="NC_000962.3"/>
</dbReference>
<dbReference type="RefSeq" id="WP_003404420.1">
    <property type="nucleotide sequence ID" value="NZ_NVQJ01000040.1"/>
</dbReference>
<dbReference type="PDB" id="2O0R">
    <property type="method" value="X-ray"/>
    <property type="resolution" value="2.00 A"/>
    <property type="chains" value="A/B=2-397"/>
</dbReference>
<dbReference type="PDBsum" id="2O0R"/>
<dbReference type="SMR" id="P9WPZ5"/>
<dbReference type="FunCoup" id="P9WPZ5">
    <property type="interactions" value="515"/>
</dbReference>
<dbReference type="STRING" id="83332.Rv0858c"/>
<dbReference type="PaxDb" id="83332-Rv0858c"/>
<dbReference type="DNASU" id="885784"/>
<dbReference type="GeneID" id="885784"/>
<dbReference type="KEGG" id="mtu:Rv0858c"/>
<dbReference type="KEGG" id="mtv:RVBD_0858c"/>
<dbReference type="TubercuList" id="Rv0858c"/>
<dbReference type="eggNOG" id="COG0436">
    <property type="taxonomic scope" value="Bacteria"/>
</dbReference>
<dbReference type="InParanoid" id="P9WPZ5"/>
<dbReference type="OrthoDB" id="9763453at2"/>
<dbReference type="PhylomeDB" id="P9WPZ5"/>
<dbReference type="BRENDA" id="2.6.1.17">
    <property type="organism ID" value="3445"/>
</dbReference>
<dbReference type="UniPathway" id="UPA00034">
    <property type="reaction ID" value="UER00020"/>
</dbReference>
<dbReference type="EvolutionaryTrace" id="P9WPZ5"/>
<dbReference type="Proteomes" id="UP000001584">
    <property type="component" value="Chromosome"/>
</dbReference>
<dbReference type="GO" id="GO:0005737">
    <property type="term" value="C:cytoplasm"/>
    <property type="evidence" value="ECO:0000318"/>
    <property type="project" value="GO_Central"/>
</dbReference>
<dbReference type="GO" id="GO:0009274">
    <property type="term" value="C:peptidoglycan-based cell wall"/>
    <property type="evidence" value="ECO:0007005"/>
    <property type="project" value="MTBBASE"/>
</dbReference>
<dbReference type="GO" id="GO:0016212">
    <property type="term" value="F:kynurenine-oxoglutarate transaminase activity"/>
    <property type="evidence" value="ECO:0000318"/>
    <property type="project" value="GO_Central"/>
</dbReference>
<dbReference type="GO" id="GO:0030170">
    <property type="term" value="F:pyridoxal phosphate binding"/>
    <property type="evidence" value="ECO:0007669"/>
    <property type="project" value="InterPro"/>
</dbReference>
<dbReference type="GO" id="GO:0009016">
    <property type="term" value="F:succinyldiaminopimelate transaminase activity"/>
    <property type="evidence" value="ECO:0007669"/>
    <property type="project" value="UniProtKB-EC"/>
</dbReference>
<dbReference type="GO" id="GO:0009089">
    <property type="term" value="P:lysine biosynthetic process via diaminopimelate"/>
    <property type="evidence" value="ECO:0007669"/>
    <property type="project" value="UniProtKB-UniPathway"/>
</dbReference>
<dbReference type="CDD" id="cd00609">
    <property type="entry name" value="AAT_like"/>
    <property type="match status" value="1"/>
</dbReference>
<dbReference type="FunFam" id="3.40.640.10:FF:000076">
    <property type="entry name" value="N-succinyldiaminopimelate aminotransferase DapC"/>
    <property type="match status" value="1"/>
</dbReference>
<dbReference type="Gene3D" id="3.90.1150.10">
    <property type="entry name" value="Aspartate Aminotransferase, domain 1"/>
    <property type="match status" value="1"/>
</dbReference>
<dbReference type="Gene3D" id="3.40.640.10">
    <property type="entry name" value="Type I PLP-dependent aspartate aminotransferase-like (Major domain)"/>
    <property type="match status" value="1"/>
</dbReference>
<dbReference type="InterPro" id="IPR004839">
    <property type="entry name" value="Aminotransferase_I/II_large"/>
</dbReference>
<dbReference type="InterPro" id="IPR051326">
    <property type="entry name" value="Kynurenine-oxoglutarate_AT"/>
</dbReference>
<dbReference type="InterPro" id="IPR015424">
    <property type="entry name" value="PyrdxlP-dep_Trfase"/>
</dbReference>
<dbReference type="InterPro" id="IPR015421">
    <property type="entry name" value="PyrdxlP-dep_Trfase_major"/>
</dbReference>
<dbReference type="InterPro" id="IPR015422">
    <property type="entry name" value="PyrdxlP-dep_Trfase_small"/>
</dbReference>
<dbReference type="NCBIfam" id="NF005855">
    <property type="entry name" value="PRK07777.1"/>
    <property type="match status" value="1"/>
</dbReference>
<dbReference type="PANTHER" id="PTHR43807">
    <property type="entry name" value="FI04487P"/>
    <property type="match status" value="1"/>
</dbReference>
<dbReference type="PANTHER" id="PTHR43807:SF20">
    <property type="entry name" value="FI04487P"/>
    <property type="match status" value="1"/>
</dbReference>
<dbReference type="Pfam" id="PF00155">
    <property type="entry name" value="Aminotran_1_2"/>
    <property type="match status" value="1"/>
</dbReference>
<dbReference type="SUPFAM" id="SSF53383">
    <property type="entry name" value="PLP-dependent transferases"/>
    <property type="match status" value="1"/>
</dbReference>